<accession>Q9Y3R4</accession>
<accession>Q3KNW4</accession>
<accession>Q6NTB4</accession>
<proteinExistence type="evidence at protein level"/>
<gene>
    <name type="primary">NEU2</name>
</gene>
<protein>
    <recommendedName>
        <fullName>Sialidase-2</fullName>
        <ecNumber evidence="5 8">3.2.1.18</ecNumber>
    </recommendedName>
    <alternativeName>
        <fullName>Cytosolic sialidase</fullName>
    </alternativeName>
    <alternativeName>
        <fullName>N-acetyl-alpha-neuraminidase 2</fullName>
    </alternativeName>
</protein>
<organism>
    <name type="scientific">Homo sapiens</name>
    <name type="common">Human</name>
    <dbReference type="NCBI Taxonomy" id="9606"/>
    <lineage>
        <taxon>Eukaryota</taxon>
        <taxon>Metazoa</taxon>
        <taxon>Chordata</taxon>
        <taxon>Craniata</taxon>
        <taxon>Vertebrata</taxon>
        <taxon>Euteleostomi</taxon>
        <taxon>Mammalia</taxon>
        <taxon>Eutheria</taxon>
        <taxon>Euarchontoglires</taxon>
        <taxon>Primates</taxon>
        <taxon>Haplorrhini</taxon>
        <taxon>Catarrhini</taxon>
        <taxon>Hominidae</taxon>
        <taxon>Homo</taxon>
    </lineage>
</organism>
<comment type="function">
    <text evidence="5 8">Exo-alpha-sialidase that catalyzes the hydrolytic cleavage of the terminal sialic acid (N-acetylneuraminic acid, Neu5Ac) of a glycan moiety in the catabolism of glycolipids, glycoproteins and oligosacharides (PubMed:14613940, PubMed:22228546). Recognizes sialyl linkage positions of the glycan moiety as well as the supramolecular organization of the sialoglycoconjugate. Displays preference for alpha-(2-&gt;3)-sialylated GD1a and GT1B gangliosides over alpha-(2-&gt;8)-sialylated GD1b, in both monomeric forms and micelles. Hydrolyzes monomeric GM1 ganglioside, but has no activity toward the miscellar form (PubMed:14613940). Has lower sialidase activity for glycoproteins such as fetuin and TF/transferrin that carry a mixture of alpha-(2-&gt;3) and alpha-(2-&gt;6)-sialyl linkages. Cleaves milk oligosaccharide alpha-(2-&gt;3)-sialyllactose, but is inactive toward alpha-(2-&gt;6)-sialyllactose isomer. Has no activity toward colominic acid, a homomer of alpha-(2-&gt;8)-linked Neu5Ac residues (PubMed:14613940).</text>
</comment>
<comment type="catalytic activity">
    <reaction evidence="5 8">
        <text>Hydrolysis of alpha-(2-&gt;3)-, alpha-(2-&gt;6)-, alpha-(2-&gt;8)- glycosidic linkages of terminal sialic acid residues in oligosaccharides, glycoproteins, glycolipids, colominic acid and synthetic substrates.</text>
        <dbReference type="EC" id="3.2.1.18"/>
    </reaction>
</comment>
<comment type="catalytic activity">
    <reaction evidence="5">
        <text>a ganglioside GD1a + H2O = a ganglioside GM1 + N-acetylneuraminate</text>
        <dbReference type="Rhea" id="RHEA:47832"/>
        <dbReference type="ChEBI" id="CHEBI:15377"/>
        <dbReference type="ChEBI" id="CHEBI:35418"/>
        <dbReference type="ChEBI" id="CHEBI:82637"/>
        <dbReference type="ChEBI" id="CHEBI:82639"/>
    </reaction>
    <physiologicalReaction direction="left-to-right" evidence="10">
        <dbReference type="Rhea" id="RHEA:47833"/>
    </physiologicalReaction>
</comment>
<comment type="catalytic activity">
    <reaction evidence="5">
        <text>a ganglioside GM1 + H2O = a ganglioside GA1 + N-acetylneuraminate</text>
        <dbReference type="Rhea" id="RHEA:47872"/>
        <dbReference type="ChEBI" id="CHEBI:15377"/>
        <dbReference type="ChEBI" id="CHEBI:35418"/>
        <dbReference type="ChEBI" id="CHEBI:82639"/>
        <dbReference type="ChEBI" id="CHEBI:88069"/>
    </reaction>
    <physiologicalReaction direction="left-to-right" evidence="10">
        <dbReference type="Rhea" id="RHEA:47873"/>
    </physiologicalReaction>
</comment>
<comment type="catalytic activity">
    <reaction evidence="5">
        <text>a ganglioside GT1b + H2O = a ganglioside GD1b + N-acetylneuraminate</text>
        <dbReference type="Rhea" id="RHEA:47828"/>
        <dbReference type="ChEBI" id="CHEBI:15377"/>
        <dbReference type="ChEBI" id="CHEBI:35418"/>
        <dbReference type="ChEBI" id="CHEBI:82939"/>
        <dbReference type="ChEBI" id="CHEBI:82940"/>
    </reaction>
    <physiologicalReaction direction="left-to-right" evidence="10">
        <dbReference type="Rhea" id="RHEA:47829"/>
    </physiologicalReaction>
</comment>
<comment type="catalytic activity">
    <reaction evidence="5">
        <text>a ganglioside GD1b + H2O = a ganglioside GM1 + N-acetylneuraminate</text>
        <dbReference type="Rhea" id="RHEA:47876"/>
        <dbReference type="ChEBI" id="CHEBI:15377"/>
        <dbReference type="ChEBI" id="CHEBI:35418"/>
        <dbReference type="ChEBI" id="CHEBI:82639"/>
        <dbReference type="ChEBI" id="CHEBI:82939"/>
    </reaction>
    <physiologicalReaction direction="left-to-right" evidence="10">
        <dbReference type="Rhea" id="RHEA:47877"/>
    </physiologicalReaction>
</comment>
<comment type="catalytic activity">
    <reaction evidence="1">
        <text>a ganglioside GD3 + H2O = a ganglioside GM3 + N-acetylneuraminate</text>
        <dbReference type="Rhea" id="RHEA:48120"/>
        <dbReference type="ChEBI" id="CHEBI:15377"/>
        <dbReference type="ChEBI" id="CHEBI:35418"/>
        <dbReference type="ChEBI" id="CHEBI:79210"/>
        <dbReference type="ChEBI" id="CHEBI:79214"/>
    </reaction>
    <physiologicalReaction direction="left-to-right" evidence="1">
        <dbReference type="Rhea" id="RHEA:48121"/>
    </physiologicalReaction>
</comment>
<comment type="catalytic activity">
    <reaction evidence="5 8">
        <text>a ganglioside GM3 + H2O = a beta-D-galactosyl-(1-&gt;4)-beta-D-glucosyl-(1&lt;-&gt;1)-ceramide + N-acetylneuraminate</text>
        <dbReference type="Rhea" id="RHEA:48136"/>
        <dbReference type="ChEBI" id="CHEBI:15377"/>
        <dbReference type="ChEBI" id="CHEBI:35418"/>
        <dbReference type="ChEBI" id="CHEBI:79208"/>
        <dbReference type="ChEBI" id="CHEBI:79210"/>
    </reaction>
    <physiologicalReaction direction="left-to-right" evidence="10 11">
        <dbReference type="Rhea" id="RHEA:48137"/>
    </physiologicalReaction>
</comment>
<comment type="catalytic activity">
    <reaction evidence="1">
        <text>a ganglioside GM2 + H2O = a ganglioside GA2 + N-acetylneuraminate</text>
        <dbReference type="Rhea" id="RHEA:48172"/>
        <dbReference type="ChEBI" id="CHEBI:15377"/>
        <dbReference type="ChEBI" id="CHEBI:35418"/>
        <dbReference type="ChEBI" id="CHEBI:79218"/>
        <dbReference type="ChEBI" id="CHEBI:90085"/>
    </reaction>
    <physiologicalReaction direction="left-to-right" evidence="1">
        <dbReference type="Rhea" id="RHEA:48173"/>
    </physiologicalReaction>
</comment>
<comment type="catalytic activity">
    <reaction evidence="5">
        <text>a neolactoside IV(3)-alpha-NeuAc-nLc4Cer(d18:1(4E)) + H2O = a neolactoside nLc4Cer(d18:1(4E)) + N-acetylneuraminate</text>
        <dbReference type="Rhea" id="RHEA:47852"/>
        <dbReference type="ChEBI" id="CHEBI:15377"/>
        <dbReference type="ChEBI" id="CHEBI:17006"/>
        <dbReference type="ChEBI" id="CHEBI:35418"/>
        <dbReference type="ChEBI" id="CHEBI:58665"/>
    </reaction>
    <physiologicalReaction direction="left-to-right" evidence="10">
        <dbReference type="Rhea" id="RHEA:47853"/>
    </physiologicalReaction>
</comment>
<comment type="catalytic activity">
    <reaction evidence="5 8">
        <text>N-acetyl-alpha-neuraminosyl-(2-&gt;3)-beta-D-galactosyl-(1-&gt;4)-D-glucose + H2O = lactose + N-acetylneuraminate</text>
        <dbReference type="Rhea" id="RHEA:64640"/>
        <dbReference type="ChEBI" id="CHEBI:15377"/>
        <dbReference type="ChEBI" id="CHEBI:17716"/>
        <dbReference type="ChEBI" id="CHEBI:35418"/>
        <dbReference type="ChEBI" id="CHEBI:156068"/>
    </reaction>
    <physiologicalReaction direction="left-to-right" evidence="10 11">
        <dbReference type="Rhea" id="RHEA:64641"/>
    </physiologicalReaction>
</comment>
<comment type="biophysicochemical properties">
    <kinetics>
        <KM evidence="5">0.24 mM for ganglioside GM3 (in the presence of Triton X-100)</KM>
        <KM evidence="5">0.14 mM for ganglioside GD1a (in the presence of Triton X-100)</KM>
        <KM evidence="5">0.51 mM for ganglioside GD1b (in the presence of Triton X-100)</KM>
        <KM evidence="5">0.38 mM for ganglioside GT1b (in the presence of Triton X-100)</KM>
        <KM evidence="5">0.28 mM for neolactoside IV(3)-alpha-NeuAc-nLc4Cer(d18:1(4E)) (in the presence of Triton X-100)</KM>
        <KM evidence="5">0.31 mM for alpha(2-&gt;3)-sialyllactose</KM>
        <Vmax evidence="5">67.0 umol/min/mg enzyme toward ganglioside GM3 (in the presence of Triton X-100)</Vmax>
        <Vmax evidence="5">322.0 umol/min/mg enzyme toward ganglioside GD1a (in the presence of Triton X-100)</Vmax>
        <Vmax evidence="5">5.45 umol/min/mg enzyme toward ganglioside GD1b (in the presence of Triton X-100)</Vmax>
        <Vmax evidence="5">190.0 umol/min/mg enzyme toward ganglioside GT1b (in the presence of Triton X-100)</Vmax>
        <Vmax evidence="5">253.0 umol/min/mg enzyme toward ganglioside neolactoside IV(3)-alpha-NeuAc-nLc4Cer(d18:1(4E)) (in the presence of Triton X-100)</Vmax>
        <Vmax evidence="5">10.0 umol/min/mg enzyme toward alpha(2-&gt;3)-sialyllactose</Vmax>
        <Vmax evidence="5">12.7 umol/min/mg enzyme toward fetuin</Vmax>
        <Vmax evidence="5">0.75 umol/min/mg enzyme toward TF/transferrin</Vmax>
        <Vmax evidence="5">0.7 umol/min/mg enzyme toward alpha-1-acid glycoprotein</Vmax>
    </kinetics>
    <phDependence>
        <text evidence="5">Optimum pH is 5.6.</text>
    </phDependence>
</comment>
<comment type="interaction">
    <interactant intactId="EBI-10327976">
        <id>Q9Y3R4</id>
    </interactant>
    <interactant intactId="EBI-3867333">
        <id>A8MQ03</id>
        <label>CYSRT1</label>
    </interactant>
    <organismsDiffer>false</organismsDiffer>
    <experiments>3</experiments>
</comment>
<comment type="interaction">
    <interactant intactId="EBI-10327976">
        <id>Q9Y3R4</id>
    </interactant>
    <interactant intactId="EBI-945833">
        <id>Q7Z3S9</id>
        <label>NOTCH2NLA</label>
    </interactant>
    <organismsDiffer>false</organismsDiffer>
    <experiments>6</experiments>
</comment>
<comment type="subcellular location">
    <subcellularLocation>
        <location evidence="4">Cytoplasm</location>
        <location evidence="4">Cytosol</location>
    </subcellularLocation>
</comment>
<comment type="tissue specificity">
    <text evidence="3">Expressed in skeletal muscle, fetal liver and embryonic carcinoma cell line NT2-D1.</text>
</comment>
<comment type="similarity">
    <text evidence="9">Belongs to the glycosyl hydrolase 33 family.</text>
</comment>
<name>NEUR2_HUMAN</name>
<reference key="1">
    <citation type="journal article" date="1999" name="Genomics">
        <title>Cloning and characterization of NEU2, a human gene homologous to rodent soluble sialidases.</title>
        <authorList>
            <person name="Monti E."/>
            <person name="Preti A."/>
            <person name="Rossi E."/>
            <person name="Ballabio A."/>
            <person name="Borsani G."/>
        </authorList>
    </citation>
    <scope>NUCLEOTIDE SEQUENCE [GENOMIC DNA]</scope>
    <scope>TISSUE SPECIFICITY</scope>
    <scope>VARIANT ASN-168</scope>
</reference>
<reference key="2">
    <citation type="journal article" date="2005" name="Nature">
        <title>Generation and annotation of the DNA sequences of human chromosomes 2 and 4.</title>
        <authorList>
            <person name="Hillier L.W."/>
            <person name="Graves T.A."/>
            <person name="Fulton R.S."/>
            <person name="Fulton L.A."/>
            <person name="Pepin K.H."/>
            <person name="Minx P."/>
            <person name="Wagner-McPherson C."/>
            <person name="Layman D."/>
            <person name="Wylie K."/>
            <person name="Sekhon M."/>
            <person name="Becker M.C."/>
            <person name="Fewell G.A."/>
            <person name="Delehaunty K.D."/>
            <person name="Miner T.L."/>
            <person name="Nash W.E."/>
            <person name="Kremitzki C."/>
            <person name="Oddy L."/>
            <person name="Du H."/>
            <person name="Sun H."/>
            <person name="Bradshaw-Cordum H."/>
            <person name="Ali J."/>
            <person name="Carter J."/>
            <person name="Cordes M."/>
            <person name="Harris A."/>
            <person name="Isak A."/>
            <person name="van Brunt A."/>
            <person name="Nguyen C."/>
            <person name="Du F."/>
            <person name="Courtney L."/>
            <person name="Kalicki J."/>
            <person name="Ozersky P."/>
            <person name="Abbott S."/>
            <person name="Armstrong J."/>
            <person name="Belter E.A."/>
            <person name="Caruso L."/>
            <person name="Cedroni M."/>
            <person name="Cotton M."/>
            <person name="Davidson T."/>
            <person name="Desai A."/>
            <person name="Elliott G."/>
            <person name="Erb T."/>
            <person name="Fronick C."/>
            <person name="Gaige T."/>
            <person name="Haakenson W."/>
            <person name="Haglund K."/>
            <person name="Holmes A."/>
            <person name="Harkins R."/>
            <person name="Kim K."/>
            <person name="Kruchowski S.S."/>
            <person name="Strong C.M."/>
            <person name="Grewal N."/>
            <person name="Goyea E."/>
            <person name="Hou S."/>
            <person name="Levy A."/>
            <person name="Martinka S."/>
            <person name="Mead K."/>
            <person name="McLellan M.D."/>
            <person name="Meyer R."/>
            <person name="Randall-Maher J."/>
            <person name="Tomlinson C."/>
            <person name="Dauphin-Kohlberg S."/>
            <person name="Kozlowicz-Reilly A."/>
            <person name="Shah N."/>
            <person name="Swearengen-Shahid S."/>
            <person name="Snider J."/>
            <person name="Strong J.T."/>
            <person name="Thompson J."/>
            <person name="Yoakum M."/>
            <person name="Leonard S."/>
            <person name="Pearman C."/>
            <person name="Trani L."/>
            <person name="Radionenko M."/>
            <person name="Waligorski J.E."/>
            <person name="Wang C."/>
            <person name="Rock S.M."/>
            <person name="Tin-Wollam A.-M."/>
            <person name="Maupin R."/>
            <person name="Latreille P."/>
            <person name="Wendl M.C."/>
            <person name="Yang S.-P."/>
            <person name="Pohl C."/>
            <person name="Wallis J.W."/>
            <person name="Spieth J."/>
            <person name="Bieri T.A."/>
            <person name="Berkowicz N."/>
            <person name="Nelson J.O."/>
            <person name="Osborne J."/>
            <person name="Ding L."/>
            <person name="Meyer R."/>
            <person name="Sabo A."/>
            <person name="Shotland Y."/>
            <person name="Sinha P."/>
            <person name="Wohldmann P.E."/>
            <person name="Cook L.L."/>
            <person name="Hickenbotham M.T."/>
            <person name="Eldred J."/>
            <person name="Williams D."/>
            <person name="Jones T.A."/>
            <person name="She X."/>
            <person name="Ciccarelli F.D."/>
            <person name="Izaurralde E."/>
            <person name="Taylor J."/>
            <person name="Schmutz J."/>
            <person name="Myers R.M."/>
            <person name="Cox D.R."/>
            <person name="Huang X."/>
            <person name="McPherson J.D."/>
            <person name="Mardis E.R."/>
            <person name="Clifton S.W."/>
            <person name="Warren W.C."/>
            <person name="Chinwalla A.T."/>
            <person name="Eddy S.R."/>
            <person name="Marra M.A."/>
            <person name="Ovcharenko I."/>
            <person name="Furey T.S."/>
            <person name="Miller W."/>
            <person name="Eichler E.E."/>
            <person name="Bork P."/>
            <person name="Suyama M."/>
            <person name="Torrents D."/>
            <person name="Waterston R.H."/>
            <person name="Wilson R.K."/>
        </authorList>
    </citation>
    <scope>NUCLEOTIDE SEQUENCE [LARGE SCALE GENOMIC DNA]</scope>
</reference>
<reference key="3">
    <citation type="submission" date="2005-07" db="EMBL/GenBank/DDBJ databases">
        <authorList>
            <person name="Mural R.J."/>
            <person name="Istrail S."/>
            <person name="Sutton G.G."/>
            <person name="Florea L."/>
            <person name="Halpern A.L."/>
            <person name="Mobarry C.M."/>
            <person name="Lippert R."/>
            <person name="Walenz B."/>
            <person name="Shatkay H."/>
            <person name="Dew I."/>
            <person name="Miller J.R."/>
            <person name="Flanigan M.J."/>
            <person name="Edwards N.J."/>
            <person name="Bolanos R."/>
            <person name="Fasulo D."/>
            <person name="Halldorsson B.V."/>
            <person name="Hannenhalli S."/>
            <person name="Turner R."/>
            <person name="Yooseph S."/>
            <person name="Lu F."/>
            <person name="Nusskern D.R."/>
            <person name="Shue B.C."/>
            <person name="Zheng X.H."/>
            <person name="Zhong F."/>
            <person name="Delcher A.L."/>
            <person name="Huson D.H."/>
            <person name="Kravitz S.A."/>
            <person name="Mouchard L."/>
            <person name="Reinert K."/>
            <person name="Remington K.A."/>
            <person name="Clark A.G."/>
            <person name="Waterman M.S."/>
            <person name="Eichler E.E."/>
            <person name="Adams M.D."/>
            <person name="Hunkapiller M.W."/>
            <person name="Myers E.W."/>
            <person name="Venter J.C."/>
        </authorList>
    </citation>
    <scope>NUCLEOTIDE SEQUENCE [LARGE SCALE GENOMIC DNA]</scope>
</reference>
<reference key="4">
    <citation type="journal article" date="2004" name="Genome Res.">
        <title>The status, quality, and expansion of the NIH full-length cDNA project: the Mammalian Gene Collection (MGC).</title>
        <authorList>
            <consortium name="The MGC Project Team"/>
        </authorList>
    </citation>
    <scope>NUCLEOTIDE SEQUENCE [LARGE SCALE MRNA]</scope>
    <scope>VARIANT ASN-168</scope>
</reference>
<reference key="5">
    <citation type="journal article" date="1999" name="Glycobiology">
        <title>Expression of a novel human sialidase encoded by the NEU2 gene.</title>
        <authorList>
            <person name="Monti E."/>
            <person name="Preti A."/>
            <person name="Nesti C."/>
            <person name="Ballabio A."/>
            <person name="Borsani G."/>
        </authorList>
    </citation>
    <scope>SUBCELLULAR LOCATION</scope>
</reference>
<reference key="6">
    <citation type="journal article" date="2004" name="J. Biol. Chem.">
        <title>Properties of recombinant human cytosolic sialidase HsNEU2. The enzyme hydrolyzes monomerically dispersed GM1 ganglioside molecules.</title>
        <authorList>
            <person name="Tringali C."/>
            <person name="Papini N."/>
            <person name="Fusi P."/>
            <person name="Croci G."/>
            <person name="Borsani G."/>
            <person name="Preti A."/>
            <person name="Tortora P."/>
            <person name="Tettamanti G."/>
            <person name="Venerando B."/>
            <person name="Monti E."/>
        </authorList>
    </citation>
    <scope>FUNCTION</scope>
    <scope>CATALYTIC ACTIVITY</scope>
    <scope>BIOPHYSICOCHEMICAL PROPERTIES</scope>
    <scope>SUBSTRATE SPECIFICITY</scope>
</reference>
<reference key="7">
    <citation type="journal article" date="2012" name="Proteins">
        <title>Molecular insight into substrate recognition by human cytosolic sialidase NEU2.</title>
        <authorList>
            <person name="Mozzi A."/>
            <person name="Mazzacuva P."/>
            <person name="Zampella G."/>
            <person name="Forcella M.E."/>
            <person name="Fusi P.A."/>
            <person name="Monti E."/>
        </authorList>
    </citation>
    <scope>FUNCTION</scope>
    <scope>CATALYTIC ACTIVITY</scope>
    <scope>ACTIVE SITE</scope>
    <scope>MUTAGENESIS OF ASP-46; GLU-218 AND GLN-270</scope>
</reference>
<reference key="8">
    <citation type="journal article" date="2005" name="J. Biol. Chem.">
        <title>Crystal structure of the human cytosolic sialidase Neu2. Evidence for the dynamic nature of substrate recognition.</title>
        <authorList>
            <person name="Chavas L.M.G."/>
            <person name="Tringali C."/>
            <person name="Fusi P."/>
            <person name="Venerando B."/>
            <person name="Tettamanti G."/>
            <person name="Kato R."/>
            <person name="Monti E."/>
            <person name="Wakatsuki S."/>
        </authorList>
    </citation>
    <scope>X-RAY CRYSTALLOGRAPHY (1.49 ANGSTROMS) IN COMPLEX WITH THE INHIBITOR 2-DEOXY-2,3-DEHYDRO-N-ACETYLNEURAMINIC ACID</scope>
</reference>
<reference key="9">
    <citation type="submission" date="2013-11" db="PDB data bank">
        <title>Tuning mechanism-based inactivators of neuraminidases: mechanistic and structural insights.</title>
        <authorList>
            <person name="Buchini S."/>
            <person name="Gallat F.X."/>
            <person name="Greig I.R."/>
            <person name="Kim J.H."/>
            <person name="Wakatsuki S."/>
            <person name="Withers S.G."/>
        </authorList>
    </citation>
    <scope>X-RAY CRYSTALLOGRAPHY (2.52 ANGSTROMS) IN COMPLEX WITH SUBSTRATE ANALOG</scope>
    <scope>ACTIVE SITE</scope>
</reference>
<reference key="10">
    <citation type="journal article" date="2007" name="Cell Res.">
        <title>A nonsynonymous SNP in human cytosolic sialidase in a small Asian population results in reduced enzyme activity: potential link with severe adverse reactions to oseltamivir.</title>
        <authorList>
            <person name="Li C.-Y."/>
            <person name="Yu Q."/>
            <person name="Ye Z.-Q."/>
            <person name="Sun Y."/>
            <person name="He Q."/>
            <person name="Li X.-M."/>
            <person name="Zhang W."/>
            <person name="Luo J."/>
            <person name="Gu X."/>
            <person name="Zheng X."/>
            <person name="Wei L."/>
        </authorList>
    </citation>
    <scope>CHARACTERIZATION OF VARIANT GLN-41</scope>
</reference>
<dbReference type="EC" id="3.2.1.18" evidence="5 8"/>
<dbReference type="EMBL" id="Y16535">
    <property type="protein sequence ID" value="CAB41449.1"/>
    <property type="molecule type" value="Genomic_DNA"/>
</dbReference>
<dbReference type="EMBL" id="AC106876">
    <property type="protein sequence ID" value="AAY24360.1"/>
    <property type="molecule type" value="Genomic_DNA"/>
</dbReference>
<dbReference type="EMBL" id="CH471063">
    <property type="protein sequence ID" value="EAW71028.1"/>
    <property type="molecule type" value="Genomic_DNA"/>
</dbReference>
<dbReference type="EMBL" id="BC069151">
    <property type="protein sequence ID" value="AAH69151.1"/>
    <property type="molecule type" value="mRNA"/>
</dbReference>
<dbReference type="EMBL" id="BC107053">
    <property type="protein sequence ID" value="AAI07054.1"/>
    <property type="molecule type" value="mRNA"/>
</dbReference>
<dbReference type="CCDS" id="CCDS2501.1"/>
<dbReference type="RefSeq" id="NP_005374.2">
    <property type="nucleotide sequence ID" value="NM_005383.2"/>
</dbReference>
<dbReference type="PDB" id="1SNT">
    <property type="method" value="X-ray"/>
    <property type="resolution" value="1.75 A"/>
    <property type="chains" value="A=1-380"/>
</dbReference>
<dbReference type="PDB" id="1SO7">
    <property type="method" value="X-ray"/>
    <property type="resolution" value="1.49 A"/>
    <property type="chains" value="A=1-380"/>
</dbReference>
<dbReference type="PDB" id="1VCU">
    <property type="method" value="X-ray"/>
    <property type="resolution" value="2.85 A"/>
    <property type="chains" value="A/B=1-380"/>
</dbReference>
<dbReference type="PDB" id="2F0Z">
    <property type="method" value="X-ray"/>
    <property type="resolution" value="2.80 A"/>
    <property type="chains" value="A=1-380"/>
</dbReference>
<dbReference type="PDB" id="2F10">
    <property type="method" value="X-ray"/>
    <property type="resolution" value="2.90 A"/>
    <property type="chains" value="A=1-380"/>
</dbReference>
<dbReference type="PDB" id="2F11">
    <property type="method" value="X-ray"/>
    <property type="resolution" value="2.57 A"/>
    <property type="chains" value="A=1-380"/>
</dbReference>
<dbReference type="PDB" id="2F12">
    <property type="method" value="X-ray"/>
    <property type="resolution" value="2.27 A"/>
    <property type="chains" value="A=1-380"/>
</dbReference>
<dbReference type="PDB" id="2F13">
    <property type="method" value="X-ray"/>
    <property type="resolution" value="2.26 A"/>
    <property type="chains" value="A=1-380"/>
</dbReference>
<dbReference type="PDB" id="2F24">
    <property type="method" value="X-ray"/>
    <property type="resolution" value="1.76 A"/>
    <property type="chains" value="A=1-380"/>
</dbReference>
<dbReference type="PDB" id="2F25">
    <property type="method" value="X-ray"/>
    <property type="resolution" value="1.95 A"/>
    <property type="chains" value="A/B=1-380"/>
</dbReference>
<dbReference type="PDB" id="2F26">
    <property type="method" value="X-ray"/>
    <property type="resolution" value="1.58 A"/>
    <property type="chains" value="A=1-380"/>
</dbReference>
<dbReference type="PDB" id="2F27">
    <property type="method" value="X-ray"/>
    <property type="resolution" value="2.15 A"/>
    <property type="chains" value="A/B=1-380"/>
</dbReference>
<dbReference type="PDB" id="2F28">
    <property type="method" value="X-ray"/>
    <property type="resolution" value="1.67 A"/>
    <property type="chains" value="A=1-380"/>
</dbReference>
<dbReference type="PDB" id="2F29">
    <property type="method" value="X-ray"/>
    <property type="resolution" value="2.92 A"/>
    <property type="chains" value="A/B=1-380"/>
</dbReference>
<dbReference type="PDB" id="4NC5">
    <property type="method" value="X-ray"/>
    <property type="resolution" value="2.51 A"/>
    <property type="chains" value="A=1-380"/>
</dbReference>
<dbReference type="PDB" id="4NCS">
    <property type="method" value="X-ray"/>
    <property type="resolution" value="2.20 A"/>
    <property type="chains" value="A=1-380"/>
</dbReference>
<dbReference type="PDBsum" id="1SNT"/>
<dbReference type="PDBsum" id="1SO7"/>
<dbReference type="PDBsum" id="1VCU"/>
<dbReference type="PDBsum" id="2F0Z"/>
<dbReference type="PDBsum" id="2F10"/>
<dbReference type="PDBsum" id="2F11"/>
<dbReference type="PDBsum" id="2F12"/>
<dbReference type="PDBsum" id="2F13"/>
<dbReference type="PDBsum" id="2F24"/>
<dbReference type="PDBsum" id="2F25"/>
<dbReference type="PDBsum" id="2F26"/>
<dbReference type="PDBsum" id="2F27"/>
<dbReference type="PDBsum" id="2F28"/>
<dbReference type="PDBsum" id="2F29"/>
<dbReference type="PDBsum" id="4NC5"/>
<dbReference type="PDBsum" id="4NCS"/>
<dbReference type="SMR" id="Q9Y3R4"/>
<dbReference type="BioGRID" id="110832">
    <property type="interactions" value="65"/>
</dbReference>
<dbReference type="FunCoup" id="Q9Y3R4">
    <property type="interactions" value="220"/>
</dbReference>
<dbReference type="IntAct" id="Q9Y3R4">
    <property type="interactions" value="47"/>
</dbReference>
<dbReference type="STRING" id="9606.ENSP00000233840"/>
<dbReference type="BindingDB" id="Q9Y3R4"/>
<dbReference type="ChEMBL" id="CHEMBL3200"/>
<dbReference type="DrugBank" id="DB03991">
    <property type="generic name" value="2-deoxy-2,3-dehydro-N-acetylneuraminic acid"/>
</dbReference>
<dbReference type="DrugBank" id="DB07960">
    <property type="generic name" value="5-ACETAMIDO-5,6-DIHYDRO-4-HYDROXY-6-ISOBUTOXY-4H-PYRAN-2-CARBOXYLIC ACID"/>
</dbReference>
<dbReference type="DrugBank" id="DB00198">
    <property type="generic name" value="Oseltamivir"/>
</dbReference>
<dbReference type="DrugBank" id="DB00558">
    <property type="generic name" value="Zanamivir"/>
</dbReference>
<dbReference type="DrugCentral" id="Q9Y3R4"/>
<dbReference type="GuidetoPHARMACOLOGY" id="3258"/>
<dbReference type="SwissLipids" id="SLP:000001360"/>
<dbReference type="CAZy" id="GH33">
    <property type="family name" value="Glycoside Hydrolase Family 33"/>
</dbReference>
<dbReference type="iPTMnet" id="Q9Y3R4"/>
<dbReference type="PhosphoSitePlus" id="Q9Y3R4"/>
<dbReference type="BioMuta" id="NEU2"/>
<dbReference type="DMDM" id="229462907"/>
<dbReference type="MassIVE" id="Q9Y3R4"/>
<dbReference type="PaxDb" id="9606-ENSP00000233840"/>
<dbReference type="PeptideAtlas" id="Q9Y3R4"/>
<dbReference type="ProteomicsDB" id="86068"/>
<dbReference type="Pumba" id="Q9Y3R4"/>
<dbReference type="Antibodypedia" id="34447">
    <property type="antibodies" value="265 antibodies from 28 providers"/>
</dbReference>
<dbReference type="DNASU" id="4759"/>
<dbReference type="Ensembl" id="ENST00000233840.3">
    <property type="protein sequence ID" value="ENSP00000233840.3"/>
    <property type="gene ID" value="ENSG00000115488.3"/>
</dbReference>
<dbReference type="GeneID" id="4759"/>
<dbReference type="KEGG" id="hsa:4759"/>
<dbReference type="MANE-Select" id="ENST00000233840.3">
    <property type="protein sequence ID" value="ENSP00000233840.3"/>
    <property type="RefSeq nucleotide sequence ID" value="NM_005383.2"/>
    <property type="RefSeq protein sequence ID" value="NP_005374.2"/>
</dbReference>
<dbReference type="UCSC" id="uc010zmn.2">
    <property type="organism name" value="human"/>
</dbReference>
<dbReference type="AGR" id="HGNC:7759"/>
<dbReference type="CTD" id="4759"/>
<dbReference type="DisGeNET" id="4759"/>
<dbReference type="GeneCards" id="NEU2"/>
<dbReference type="HGNC" id="HGNC:7759">
    <property type="gene designation" value="NEU2"/>
</dbReference>
<dbReference type="HPA" id="ENSG00000115488">
    <property type="expression patterns" value="Tissue enriched (skin)"/>
</dbReference>
<dbReference type="MIM" id="605528">
    <property type="type" value="gene"/>
</dbReference>
<dbReference type="neXtProt" id="NX_Q9Y3R4"/>
<dbReference type="OpenTargets" id="ENSG00000115488"/>
<dbReference type="PharmGKB" id="PA31561"/>
<dbReference type="VEuPathDB" id="HostDB:ENSG00000115488"/>
<dbReference type="eggNOG" id="ENOG502QSFT">
    <property type="taxonomic scope" value="Eukaryota"/>
</dbReference>
<dbReference type="GeneTree" id="ENSGT00950000182944"/>
<dbReference type="HOGENOM" id="CLU_024620_2_1_1"/>
<dbReference type="InParanoid" id="Q9Y3R4"/>
<dbReference type="OMA" id="VQWRAQE"/>
<dbReference type="OrthoDB" id="2739686at2759"/>
<dbReference type="PAN-GO" id="Q9Y3R4">
    <property type="GO annotations" value="6 GO annotations based on evolutionary models"/>
</dbReference>
<dbReference type="PhylomeDB" id="Q9Y3R4"/>
<dbReference type="TreeFam" id="TF331063"/>
<dbReference type="BRENDA" id="3.2.1.18">
    <property type="organism ID" value="2681"/>
</dbReference>
<dbReference type="PathwayCommons" id="Q9Y3R4"/>
<dbReference type="Reactome" id="R-HSA-4085001">
    <property type="pathway name" value="Sialic acid metabolism"/>
</dbReference>
<dbReference type="Reactome" id="R-HSA-9840310">
    <property type="pathway name" value="Glycosphingolipid catabolism"/>
</dbReference>
<dbReference type="SABIO-RK" id="Q9Y3R4"/>
<dbReference type="SignaLink" id="Q9Y3R4"/>
<dbReference type="BioGRID-ORCS" id="4759">
    <property type="hits" value="6 hits in 1147 CRISPR screens"/>
</dbReference>
<dbReference type="EvolutionaryTrace" id="Q9Y3R4"/>
<dbReference type="GeneWiki" id="NEU2"/>
<dbReference type="GenomeRNAi" id="4759"/>
<dbReference type="Pharos" id="Q9Y3R4">
    <property type="development level" value="Tbio"/>
</dbReference>
<dbReference type="PRO" id="PR:Q9Y3R4"/>
<dbReference type="Proteomes" id="UP000005640">
    <property type="component" value="Chromosome 2"/>
</dbReference>
<dbReference type="RNAct" id="Q9Y3R4">
    <property type="molecule type" value="protein"/>
</dbReference>
<dbReference type="Bgee" id="ENSG00000115488">
    <property type="expression patterns" value="Expressed in male germ line stem cell (sensu Vertebrata) in testis and 7 other cell types or tissues"/>
</dbReference>
<dbReference type="GO" id="GO:1902494">
    <property type="term" value="C:catalytic complex"/>
    <property type="evidence" value="ECO:0000314"/>
    <property type="project" value="CAFA"/>
</dbReference>
<dbReference type="GO" id="GO:0005737">
    <property type="term" value="C:cytoplasm"/>
    <property type="evidence" value="ECO:0000318"/>
    <property type="project" value="GO_Central"/>
</dbReference>
<dbReference type="GO" id="GO:0005829">
    <property type="term" value="C:cytosol"/>
    <property type="evidence" value="ECO:0000314"/>
    <property type="project" value="UniProtKB"/>
</dbReference>
<dbReference type="GO" id="GO:0005764">
    <property type="term" value="C:lysosome"/>
    <property type="evidence" value="ECO:0000318"/>
    <property type="project" value="GO_Central"/>
</dbReference>
<dbReference type="GO" id="GO:0016020">
    <property type="term" value="C:membrane"/>
    <property type="evidence" value="ECO:0000318"/>
    <property type="project" value="GO_Central"/>
</dbReference>
<dbReference type="GO" id="GO:0004308">
    <property type="term" value="F:exo-alpha-sialidase activity"/>
    <property type="evidence" value="ECO:0000314"/>
    <property type="project" value="UniProtKB"/>
</dbReference>
<dbReference type="GO" id="GO:0006689">
    <property type="term" value="P:ganglioside catabolic process"/>
    <property type="evidence" value="ECO:0000314"/>
    <property type="project" value="UniProtKB"/>
</dbReference>
<dbReference type="GO" id="GO:0006516">
    <property type="term" value="P:glycoprotein catabolic process"/>
    <property type="evidence" value="ECO:0000314"/>
    <property type="project" value="UniProtKB"/>
</dbReference>
<dbReference type="GO" id="GO:0046479">
    <property type="term" value="P:glycosphingolipid catabolic process"/>
    <property type="evidence" value="ECO:0000304"/>
    <property type="project" value="Reactome"/>
</dbReference>
<dbReference type="GO" id="GO:0009313">
    <property type="term" value="P:oligosaccharide catabolic process"/>
    <property type="evidence" value="ECO:0000314"/>
    <property type="project" value="UniProtKB"/>
</dbReference>
<dbReference type="CDD" id="cd15482">
    <property type="entry name" value="Sialidase_non-viral"/>
    <property type="match status" value="1"/>
</dbReference>
<dbReference type="FunFam" id="2.120.10.10:FF:000002">
    <property type="entry name" value="Neuraminidase 3"/>
    <property type="match status" value="1"/>
</dbReference>
<dbReference type="Gene3D" id="2.120.10.10">
    <property type="match status" value="1"/>
</dbReference>
<dbReference type="InterPro" id="IPR011040">
    <property type="entry name" value="Sialidase"/>
</dbReference>
<dbReference type="InterPro" id="IPR026856">
    <property type="entry name" value="Sialidase_fam"/>
</dbReference>
<dbReference type="InterPro" id="IPR036278">
    <property type="entry name" value="Sialidase_sf"/>
</dbReference>
<dbReference type="PANTHER" id="PTHR10628">
    <property type="entry name" value="SIALIDASE"/>
    <property type="match status" value="1"/>
</dbReference>
<dbReference type="PANTHER" id="PTHR10628:SF6">
    <property type="entry name" value="SIALIDASE-2"/>
    <property type="match status" value="1"/>
</dbReference>
<dbReference type="Pfam" id="PF13088">
    <property type="entry name" value="BNR_2"/>
    <property type="match status" value="1"/>
</dbReference>
<dbReference type="SUPFAM" id="SSF50939">
    <property type="entry name" value="Sialidases"/>
    <property type="match status" value="1"/>
</dbReference>
<feature type="chain" id="PRO_0000208899" description="Sialidase-2">
    <location>
        <begin position="1"/>
        <end position="380"/>
    </location>
</feature>
<feature type="repeat" description="BNR 1">
    <location>
        <begin position="127"/>
        <end position="138"/>
    </location>
</feature>
<feature type="repeat" description="BNR 2">
    <location>
        <begin position="197"/>
        <end position="208"/>
    </location>
</feature>
<feature type="short sequence motif" description="FRIP motif">
    <location>
        <begin position="20"/>
        <end position="23"/>
    </location>
</feature>
<feature type="active site" description="Proton acceptor" evidence="8">
    <location>
        <position position="46"/>
    </location>
</feature>
<feature type="active site" description="Nucleophile">
    <location>
        <position position="334"/>
    </location>
</feature>
<feature type="active site" evidence="2">
    <location>
        <position position="355"/>
    </location>
</feature>
<feature type="binding site">
    <location>
        <position position="21"/>
    </location>
    <ligand>
        <name>substrate</name>
    </ligand>
</feature>
<feature type="binding site">
    <location>
        <position position="41"/>
    </location>
    <ligand>
        <name>substrate</name>
    </ligand>
</feature>
<feature type="binding site">
    <location>
        <position position="179"/>
    </location>
    <ligand>
        <name>substrate</name>
    </ligand>
</feature>
<feature type="binding site">
    <location>
        <position position="181"/>
    </location>
    <ligand>
        <name>substrate</name>
    </ligand>
</feature>
<feature type="binding site">
    <location>
        <position position="218"/>
    </location>
    <ligand>
        <name>substrate</name>
    </ligand>
</feature>
<feature type="binding site">
    <location>
        <position position="237"/>
    </location>
    <ligand>
        <name>substrate</name>
    </ligand>
</feature>
<feature type="binding site">
    <location>
        <position position="304"/>
    </location>
    <ligand>
        <name>substrate</name>
    </ligand>
</feature>
<feature type="sequence variant" id="VAR_024461" description="In dbSNP:rs2233384.">
    <original>S</original>
    <variation>R</variation>
    <location>
        <position position="11"/>
    </location>
</feature>
<feature type="sequence variant" id="VAR_024462" description="Reduced activity; increased sensitivity to inhibition by oseltamivir carboxylate; dbSNP:rs2233385." evidence="7">
    <original>R</original>
    <variation>Q</variation>
    <location>
        <position position="41"/>
    </location>
</feature>
<feature type="sequence variant" id="VAR_049204" description="In dbSNP:rs2233390.">
    <original>A</original>
    <variation>T</variation>
    <location>
        <position position="145"/>
    </location>
</feature>
<feature type="sequence variant" id="VAR_055311" description="In dbSNP:rs2233391." evidence="3 6">
    <original>H</original>
    <variation>N</variation>
    <location>
        <position position="168"/>
    </location>
</feature>
<feature type="sequence variant" id="VAR_055312" description="In dbSNP:rs2233393.">
    <original>R</original>
    <variation>Q</variation>
    <location>
        <position position="182"/>
    </location>
</feature>
<feature type="mutagenesis site" description="Loss of enzyme activity." evidence="8">
    <original>D</original>
    <variation>A</variation>
    <location>
        <position position="46"/>
    </location>
</feature>
<feature type="mutagenesis site" description="Loss of enzyme activity." evidence="8">
    <original>E</original>
    <variation>A</variation>
    <variation>Q</variation>
    <location>
        <position position="218"/>
    </location>
</feature>
<feature type="mutagenesis site" description="No effect on enzyme activity." evidence="8">
    <original>Q</original>
    <variation>E</variation>
    <location>
        <position position="270"/>
    </location>
</feature>
<feature type="strand" evidence="12">
    <location>
        <begin position="7"/>
        <end position="14"/>
    </location>
</feature>
<feature type="strand" evidence="13">
    <location>
        <begin position="16"/>
        <end position="18"/>
    </location>
</feature>
<feature type="strand" evidence="12">
    <location>
        <begin position="20"/>
        <end position="28"/>
    </location>
</feature>
<feature type="turn" evidence="12">
    <location>
        <begin position="29"/>
        <end position="32"/>
    </location>
</feature>
<feature type="strand" evidence="12">
    <location>
        <begin position="33"/>
        <end position="40"/>
    </location>
</feature>
<feature type="helix" evidence="16">
    <location>
        <begin position="46"/>
        <end position="48"/>
    </location>
</feature>
<feature type="strand" evidence="12">
    <location>
        <begin position="51"/>
        <end position="60"/>
    </location>
</feature>
<feature type="turn" evidence="12">
    <location>
        <begin position="61"/>
        <end position="64"/>
    </location>
</feature>
<feature type="strand" evidence="12">
    <location>
        <begin position="65"/>
        <end position="68"/>
    </location>
</feature>
<feature type="strand" evidence="14">
    <location>
        <begin position="75"/>
        <end position="77"/>
    </location>
</feature>
<feature type="strand" evidence="12">
    <location>
        <begin position="82"/>
        <end position="91"/>
    </location>
</feature>
<feature type="turn" evidence="12">
    <location>
        <begin position="93"/>
        <end position="95"/>
    </location>
</feature>
<feature type="strand" evidence="12">
    <location>
        <begin position="98"/>
        <end position="108"/>
    </location>
</feature>
<feature type="helix" evidence="12">
    <location>
        <begin position="111"/>
        <end position="115"/>
    </location>
</feature>
<feature type="strand" evidence="15">
    <location>
        <begin position="116"/>
        <end position="118"/>
    </location>
</feature>
<feature type="strand" evidence="12">
    <location>
        <begin position="123"/>
        <end position="131"/>
    </location>
</feature>
<feature type="helix" evidence="12">
    <location>
        <begin position="143"/>
        <end position="147"/>
    </location>
</feature>
<feature type="helix" evidence="12">
    <location>
        <begin position="148"/>
        <end position="153"/>
    </location>
</feature>
<feature type="strand" evidence="12">
    <location>
        <begin position="154"/>
        <end position="159"/>
    </location>
</feature>
<feature type="strand" evidence="12">
    <location>
        <begin position="174"/>
        <end position="182"/>
    </location>
</feature>
<feature type="strand" evidence="12">
    <location>
        <begin position="185"/>
        <end position="188"/>
    </location>
</feature>
<feature type="strand" evidence="12">
    <location>
        <begin position="191"/>
        <end position="201"/>
    </location>
</feature>
<feature type="strand" evidence="12">
    <location>
        <begin position="213"/>
        <end position="225"/>
    </location>
</feature>
<feature type="strand" evidence="12">
    <location>
        <begin position="230"/>
        <end position="250"/>
    </location>
</feature>
<feature type="strand" evidence="12">
    <location>
        <begin position="259"/>
        <end position="265"/>
    </location>
</feature>
<feature type="turn" evidence="12">
    <location>
        <begin position="268"/>
        <end position="270"/>
    </location>
</feature>
<feature type="strand" evidence="12">
    <location>
        <begin position="275"/>
        <end position="280"/>
    </location>
</feature>
<feature type="strand" evidence="12">
    <location>
        <begin position="290"/>
        <end position="298"/>
    </location>
</feature>
<feature type="strand" evidence="12">
    <location>
        <begin position="301"/>
        <end position="314"/>
    </location>
</feature>
<feature type="helix" evidence="12">
    <location>
        <begin position="318"/>
        <end position="320"/>
    </location>
</feature>
<feature type="strand" evidence="12">
    <location>
        <begin position="325"/>
        <end position="342"/>
    </location>
</feature>
<feature type="strand" evidence="12">
    <location>
        <begin position="346"/>
        <end position="356"/>
    </location>
</feature>
<feature type="turn" evidence="12">
    <location>
        <begin position="357"/>
        <end position="360"/>
    </location>
</feature>
<feature type="strand" evidence="12">
    <location>
        <begin position="361"/>
        <end position="368"/>
    </location>
</feature>
<feature type="helix" evidence="12">
    <location>
        <begin position="369"/>
        <end position="372"/>
    </location>
</feature>
<feature type="helix" evidence="12">
    <location>
        <begin position="374"/>
        <end position="376"/>
    </location>
</feature>
<evidence type="ECO:0000250" key="1">
    <source>
        <dbReference type="UniProtKB" id="Q9JMH3"/>
    </source>
</evidence>
<evidence type="ECO:0000255" key="2"/>
<evidence type="ECO:0000269" key="3">
    <source>
    </source>
</evidence>
<evidence type="ECO:0000269" key="4">
    <source>
    </source>
</evidence>
<evidence type="ECO:0000269" key="5">
    <source>
    </source>
</evidence>
<evidence type="ECO:0000269" key="6">
    <source>
    </source>
</evidence>
<evidence type="ECO:0000269" key="7">
    <source>
    </source>
</evidence>
<evidence type="ECO:0000269" key="8">
    <source>
    </source>
</evidence>
<evidence type="ECO:0000305" key="9"/>
<evidence type="ECO:0000305" key="10">
    <source>
    </source>
</evidence>
<evidence type="ECO:0000305" key="11">
    <source>
    </source>
</evidence>
<evidence type="ECO:0007829" key="12">
    <source>
        <dbReference type="PDB" id="1SO7"/>
    </source>
</evidence>
<evidence type="ECO:0007829" key="13">
    <source>
        <dbReference type="PDB" id="2F0Z"/>
    </source>
</evidence>
<evidence type="ECO:0007829" key="14">
    <source>
        <dbReference type="PDB" id="2F10"/>
    </source>
</evidence>
<evidence type="ECO:0007829" key="15">
    <source>
        <dbReference type="PDB" id="2F12"/>
    </source>
</evidence>
<evidence type="ECO:0007829" key="16">
    <source>
        <dbReference type="PDB" id="2F25"/>
    </source>
</evidence>
<sequence length="380" mass="42254">MASLPVLQKESVFQSGAHAYRIPALLYLPGQQSLLAFAEQRASKKDEHAELIVLRRGDYDAPTHQVQWQAQEVVAQARLDGHRSMNPCPLYDAQTGTLFLFFIAIPGQVTEQQQLQTRANVTRLCQVTSTDHGRTWSSPRDLTDAAIGPAYREWSTFAVGPGHCLQLHDRARSLVVPAYAYRKLHPIQRPIPSAFCFLSHDHGRTWARGHFVAQDTLECQVAEVETGEQRVVTLNARSHLRARVQAQSTNDGLDFQESQLVKKLVEPPPQGCQGSVISFPSPRSGPGSPAQWLLYTHPTHSWQRADLGAYLNPRPPAPEAWSEPVLLAKGSCAYSDLQSMGTGPDGSPLFGCLYEANDYEEIVFLMFTLKQAFPAEYLPQ</sequence>
<keyword id="KW-0002">3D-structure</keyword>
<keyword id="KW-0119">Carbohydrate metabolism</keyword>
<keyword id="KW-0963">Cytoplasm</keyword>
<keyword id="KW-0326">Glycosidase</keyword>
<keyword id="KW-0378">Hydrolase</keyword>
<keyword id="KW-0442">Lipid degradation</keyword>
<keyword id="KW-0443">Lipid metabolism</keyword>
<keyword id="KW-1267">Proteomics identification</keyword>
<keyword id="KW-1185">Reference proteome</keyword>
<keyword id="KW-0677">Repeat</keyword>